<feature type="chain" id="PRO_0000198371" description="Ribulokinase">
    <location>
        <begin position="1"/>
        <end position="545"/>
    </location>
</feature>
<evidence type="ECO:0000255" key="1">
    <source>
        <dbReference type="HAMAP-Rule" id="MF_00520"/>
    </source>
</evidence>
<accession>Q8NXY1</accession>
<reference key="1">
    <citation type="journal article" date="2002" name="Lancet">
        <title>Genome and virulence determinants of high virulence community-acquired MRSA.</title>
        <authorList>
            <person name="Baba T."/>
            <person name="Takeuchi F."/>
            <person name="Kuroda M."/>
            <person name="Yuzawa H."/>
            <person name="Aoki K."/>
            <person name="Oguchi A."/>
            <person name="Nagai Y."/>
            <person name="Iwama N."/>
            <person name="Asano K."/>
            <person name="Naimi T."/>
            <person name="Kuroda H."/>
            <person name="Cui L."/>
            <person name="Yamamoto K."/>
            <person name="Hiramatsu K."/>
        </authorList>
    </citation>
    <scope>NUCLEOTIDE SEQUENCE [LARGE SCALE GENOMIC DNA]</scope>
    <source>
        <strain>MW2</strain>
    </source>
</reference>
<protein>
    <recommendedName>
        <fullName evidence="1">Ribulokinase</fullName>
        <ecNumber evidence="1">2.7.1.16</ecNumber>
    </recommendedName>
</protein>
<name>ARAB_STAAW</name>
<keyword id="KW-0054">Arabinose catabolism</keyword>
<keyword id="KW-0067">ATP-binding</keyword>
<keyword id="KW-0119">Carbohydrate metabolism</keyword>
<keyword id="KW-0418">Kinase</keyword>
<keyword id="KW-0547">Nucleotide-binding</keyword>
<keyword id="KW-0808">Transferase</keyword>
<dbReference type="EC" id="2.7.1.16" evidence="1"/>
<dbReference type="EMBL" id="BA000033">
    <property type="protein sequence ID" value="BAB94372.1"/>
    <property type="molecule type" value="Genomic_DNA"/>
</dbReference>
<dbReference type="RefSeq" id="WP_000122337.1">
    <property type="nucleotide sequence ID" value="NC_003923.1"/>
</dbReference>
<dbReference type="SMR" id="Q8NXY1"/>
<dbReference type="KEGG" id="sam:MW0507"/>
<dbReference type="HOGENOM" id="CLU_009281_9_1_9"/>
<dbReference type="UniPathway" id="UPA00145">
    <property type="reaction ID" value="UER00566"/>
</dbReference>
<dbReference type="GO" id="GO:0005737">
    <property type="term" value="C:cytoplasm"/>
    <property type="evidence" value="ECO:0007669"/>
    <property type="project" value="TreeGrafter"/>
</dbReference>
<dbReference type="GO" id="GO:0005524">
    <property type="term" value="F:ATP binding"/>
    <property type="evidence" value="ECO:0007669"/>
    <property type="project" value="UniProtKB-KW"/>
</dbReference>
<dbReference type="GO" id="GO:0019150">
    <property type="term" value="F:D-ribulokinase activity"/>
    <property type="evidence" value="ECO:0007669"/>
    <property type="project" value="RHEA"/>
</dbReference>
<dbReference type="GO" id="GO:0008741">
    <property type="term" value="F:ribulokinase activity"/>
    <property type="evidence" value="ECO:0007669"/>
    <property type="project" value="UniProtKB-UniRule"/>
</dbReference>
<dbReference type="GO" id="GO:0019569">
    <property type="term" value="P:L-arabinose catabolic process to xylulose 5-phosphate"/>
    <property type="evidence" value="ECO:0007669"/>
    <property type="project" value="UniProtKB-UniRule"/>
</dbReference>
<dbReference type="CDD" id="cd07781">
    <property type="entry name" value="ASKHA_NBD_FGGY_L-RBK"/>
    <property type="match status" value="1"/>
</dbReference>
<dbReference type="Gene3D" id="1.20.58.2240">
    <property type="match status" value="1"/>
</dbReference>
<dbReference type="Gene3D" id="3.30.420.40">
    <property type="match status" value="1"/>
</dbReference>
<dbReference type="HAMAP" id="MF_00520">
    <property type="entry name" value="Ribulokinase"/>
    <property type="match status" value="1"/>
</dbReference>
<dbReference type="InterPro" id="IPR043129">
    <property type="entry name" value="ATPase_NBD"/>
</dbReference>
<dbReference type="InterPro" id="IPR000577">
    <property type="entry name" value="Carb_kinase_FGGY"/>
</dbReference>
<dbReference type="InterPro" id="IPR018485">
    <property type="entry name" value="FGGY_C"/>
</dbReference>
<dbReference type="InterPro" id="IPR018484">
    <property type="entry name" value="FGGY_N"/>
</dbReference>
<dbReference type="InterPro" id="IPR005929">
    <property type="entry name" value="Ribulokinase"/>
</dbReference>
<dbReference type="NCBIfam" id="NF003154">
    <property type="entry name" value="PRK04123.1"/>
    <property type="match status" value="1"/>
</dbReference>
<dbReference type="PANTHER" id="PTHR43435:SF4">
    <property type="entry name" value="FGGY CARBOHYDRATE KINASE DOMAIN-CONTAINING PROTEIN"/>
    <property type="match status" value="1"/>
</dbReference>
<dbReference type="PANTHER" id="PTHR43435">
    <property type="entry name" value="RIBULOKINASE"/>
    <property type="match status" value="1"/>
</dbReference>
<dbReference type="Pfam" id="PF02782">
    <property type="entry name" value="FGGY_C"/>
    <property type="match status" value="1"/>
</dbReference>
<dbReference type="Pfam" id="PF00370">
    <property type="entry name" value="FGGY_N"/>
    <property type="match status" value="1"/>
</dbReference>
<dbReference type="PIRSF" id="PIRSF000538">
    <property type="entry name" value="GlpK"/>
    <property type="match status" value="1"/>
</dbReference>
<dbReference type="SUPFAM" id="SSF53067">
    <property type="entry name" value="Actin-like ATPase domain"/>
    <property type="match status" value="2"/>
</dbReference>
<sequence length="545" mass="60967">MSYSIGIDYGTASGRVFLINTTNGQVVSKFVKPYTHGVIESELNGLKIPHTYALQNSNDYLEIMEEGISYIVRESKIDPDNIVGIGIDFTSSTIIFTDENLNPVHNLKQFKNNPHAYVKLWKHHGAYKEAEKLYQTAIENNNKWLGHYGYNVSSEWMIPKIMEVMNRAPEIMEKTAYIMEAGDWIVNKLTNKNIRSNCGLGFKAFWEEETGFHYDLFDKIDPKLSKVIQDKVSAPVVNIGEAVGKLDDKMAQKLGLSKETMVSPFIIDAHASLLGIGSEKDKEMTMVMGTSTCHLMLNEKQHQVPGISGSVKGAIIPELFAYEAGQSAVGDLFEYVAKQAPKSYVDEAANRNMTVFELMNEKIKHQMPGESGLIALDWHNGNRSVLSDSNLTGCIFGLTLQTKHEDIYRAYLEATAFGTKMIMQQYQDWHMEVEKVFACGGIPKKNAVMMDIYANVLNKKLIVMDSEYAPAIGAAILGAVSGGAHNSINDAVDAMKEPILYEINPEAEKVQRYETLFKAYKALHDIHGYKKANIMKDIQSLRVEG</sequence>
<gene>
    <name evidence="1" type="primary">araB</name>
    <name type="ordered locus">MW0507</name>
</gene>
<proteinExistence type="inferred from homology"/>
<comment type="catalytic activity">
    <reaction evidence="1">
        <text>D-ribulose + ATP = D-ribulose 5-phosphate + ADP + H(+)</text>
        <dbReference type="Rhea" id="RHEA:17601"/>
        <dbReference type="ChEBI" id="CHEBI:15378"/>
        <dbReference type="ChEBI" id="CHEBI:17173"/>
        <dbReference type="ChEBI" id="CHEBI:30616"/>
        <dbReference type="ChEBI" id="CHEBI:58121"/>
        <dbReference type="ChEBI" id="CHEBI:456216"/>
        <dbReference type="EC" id="2.7.1.16"/>
    </reaction>
</comment>
<comment type="catalytic activity">
    <reaction evidence="1">
        <text>L-ribulose + ATP = L-ribulose 5-phosphate + ADP + H(+)</text>
        <dbReference type="Rhea" id="RHEA:22072"/>
        <dbReference type="ChEBI" id="CHEBI:15378"/>
        <dbReference type="ChEBI" id="CHEBI:16880"/>
        <dbReference type="ChEBI" id="CHEBI:30616"/>
        <dbReference type="ChEBI" id="CHEBI:58226"/>
        <dbReference type="ChEBI" id="CHEBI:456216"/>
        <dbReference type="EC" id="2.7.1.16"/>
    </reaction>
</comment>
<comment type="pathway">
    <text evidence="1">Carbohydrate degradation; L-arabinose degradation via L-ribulose; D-xylulose 5-phosphate from L-arabinose (bacterial route): step 2/3.</text>
</comment>
<comment type="similarity">
    <text evidence="1">Belongs to the ribulokinase family.</text>
</comment>
<organism>
    <name type="scientific">Staphylococcus aureus (strain MW2)</name>
    <dbReference type="NCBI Taxonomy" id="196620"/>
    <lineage>
        <taxon>Bacteria</taxon>
        <taxon>Bacillati</taxon>
        <taxon>Bacillota</taxon>
        <taxon>Bacilli</taxon>
        <taxon>Bacillales</taxon>
        <taxon>Staphylococcaceae</taxon>
        <taxon>Staphylococcus</taxon>
    </lineage>
</organism>